<dbReference type="EMBL" id="CP000416">
    <property type="protein sequence ID" value="ABJ63991.1"/>
    <property type="molecule type" value="Genomic_DNA"/>
</dbReference>
<dbReference type="RefSeq" id="WP_011667777.1">
    <property type="nucleotide sequence ID" value="NC_008497.1"/>
</dbReference>
<dbReference type="SMR" id="Q03S31"/>
<dbReference type="STRING" id="387344.LVIS_0849"/>
<dbReference type="KEGG" id="lbr:LVIS_0849"/>
<dbReference type="eggNOG" id="COG4474">
    <property type="taxonomic scope" value="Bacteria"/>
</dbReference>
<dbReference type="HOGENOM" id="CLU_105319_0_0_9"/>
<dbReference type="Proteomes" id="UP000001652">
    <property type="component" value="Chromosome"/>
</dbReference>
<dbReference type="Gene3D" id="3.40.50.450">
    <property type="match status" value="1"/>
</dbReference>
<dbReference type="HAMAP" id="MF_01575">
    <property type="entry name" value="UPF0398"/>
    <property type="match status" value="1"/>
</dbReference>
<dbReference type="InterPro" id="IPR010697">
    <property type="entry name" value="YspA"/>
</dbReference>
<dbReference type="NCBIfam" id="NF010181">
    <property type="entry name" value="PRK13660.1"/>
    <property type="match status" value="1"/>
</dbReference>
<dbReference type="PANTHER" id="PTHR38440:SF1">
    <property type="entry name" value="UPF0398 PROTEIN SPR0331"/>
    <property type="match status" value="1"/>
</dbReference>
<dbReference type="PANTHER" id="PTHR38440">
    <property type="entry name" value="UPF0398 PROTEIN YPSA"/>
    <property type="match status" value="1"/>
</dbReference>
<dbReference type="Pfam" id="PF06908">
    <property type="entry name" value="YpsA"/>
    <property type="match status" value="1"/>
</dbReference>
<dbReference type="PIRSF" id="PIRSF021290">
    <property type="entry name" value="DUF1273"/>
    <property type="match status" value="1"/>
</dbReference>
<dbReference type="SUPFAM" id="SSF102405">
    <property type="entry name" value="MCP/YpsA-like"/>
    <property type="match status" value="1"/>
</dbReference>
<comment type="similarity">
    <text evidence="1">Belongs to the UPF0398 family.</text>
</comment>
<reference key="1">
    <citation type="journal article" date="2006" name="Proc. Natl. Acad. Sci. U.S.A.">
        <title>Comparative genomics of the lactic acid bacteria.</title>
        <authorList>
            <person name="Makarova K.S."/>
            <person name="Slesarev A."/>
            <person name="Wolf Y.I."/>
            <person name="Sorokin A."/>
            <person name="Mirkin B."/>
            <person name="Koonin E.V."/>
            <person name="Pavlov A."/>
            <person name="Pavlova N."/>
            <person name="Karamychev V."/>
            <person name="Polouchine N."/>
            <person name="Shakhova V."/>
            <person name="Grigoriev I."/>
            <person name="Lou Y."/>
            <person name="Rohksar D."/>
            <person name="Lucas S."/>
            <person name="Huang K."/>
            <person name="Goodstein D.M."/>
            <person name="Hawkins T."/>
            <person name="Plengvidhya V."/>
            <person name="Welker D."/>
            <person name="Hughes J."/>
            <person name="Goh Y."/>
            <person name="Benson A."/>
            <person name="Baldwin K."/>
            <person name="Lee J.-H."/>
            <person name="Diaz-Muniz I."/>
            <person name="Dosti B."/>
            <person name="Smeianov V."/>
            <person name="Wechter W."/>
            <person name="Barabote R."/>
            <person name="Lorca G."/>
            <person name="Altermann E."/>
            <person name="Barrangou R."/>
            <person name="Ganesan B."/>
            <person name="Xie Y."/>
            <person name="Rawsthorne H."/>
            <person name="Tamir D."/>
            <person name="Parker C."/>
            <person name="Breidt F."/>
            <person name="Broadbent J.R."/>
            <person name="Hutkins R."/>
            <person name="O'Sullivan D."/>
            <person name="Steele J."/>
            <person name="Unlu G."/>
            <person name="Saier M.H. Jr."/>
            <person name="Klaenhammer T."/>
            <person name="Richardson P."/>
            <person name="Kozyavkin S."/>
            <person name="Weimer B.C."/>
            <person name="Mills D.A."/>
        </authorList>
    </citation>
    <scope>NUCLEOTIDE SEQUENCE [LARGE SCALE GENOMIC DNA]</scope>
    <source>
        <strain>ATCC 367 / BCRC 12310 / CIP 105137 / JCM 1170 / LMG 11437 / NCIMB 947 / NCTC 947</strain>
    </source>
</reference>
<accession>Q03S31</accession>
<organism>
    <name type="scientific">Levilactobacillus brevis (strain ATCC 367 / BCRC 12310 / CIP 105137 / JCM 1170 / LMG 11437 / NCIMB 947 / NCTC 947)</name>
    <name type="common">Lactobacillus brevis</name>
    <dbReference type="NCBI Taxonomy" id="387344"/>
    <lineage>
        <taxon>Bacteria</taxon>
        <taxon>Bacillati</taxon>
        <taxon>Bacillota</taxon>
        <taxon>Bacilli</taxon>
        <taxon>Lactobacillales</taxon>
        <taxon>Lactobacillaceae</taxon>
        <taxon>Levilactobacillus</taxon>
    </lineage>
</organism>
<sequence>MSRLWLTGYRSYELGVFGSQDPKLLVIKDTLKKLLIGKLENGMDWLITGGQLGVEQWAAEVGLALKPDYPELKIAMMTPFAEFGSNWNENNRGTYAQLASRVDFHQSVSEQPYHGPQQLRNYQEFMLTHTDEAVMVYDLEVEGKPKYDYEAITRFAEQHAYPLTLIDMDWLQESANEYQENSNNGSQFE</sequence>
<evidence type="ECO:0000255" key="1">
    <source>
        <dbReference type="HAMAP-Rule" id="MF_01575"/>
    </source>
</evidence>
<protein>
    <recommendedName>
        <fullName evidence="1">UPF0398 protein LVIS_0849</fullName>
    </recommendedName>
</protein>
<gene>
    <name type="ordered locus">LVIS_0849</name>
</gene>
<feature type="chain" id="PRO_1000069211" description="UPF0398 protein LVIS_0849">
    <location>
        <begin position="1"/>
        <end position="189"/>
    </location>
</feature>
<name>Y849_LEVBA</name>
<keyword id="KW-1185">Reference proteome</keyword>
<proteinExistence type="inferred from homology"/>